<feature type="chain" id="PRO_0000104176" description="Protein translocase subunit SecE">
    <location>
        <begin position="1"/>
        <end position="60"/>
    </location>
</feature>
<feature type="transmembrane region" description="Helical" evidence="1">
    <location>
        <begin position="31"/>
        <end position="51"/>
    </location>
</feature>
<reference key="1">
    <citation type="journal article" date="2004" name="Proc. Natl. Acad. Sci. U.S.A.">
        <title>Complete genomes of two clinical Staphylococcus aureus strains: evidence for the rapid evolution of virulence and drug resistance.</title>
        <authorList>
            <person name="Holden M.T.G."/>
            <person name="Feil E.J."/>
            <person name="Lindsay J.A."/>
            <person name="Peacock S.J."/>
            <person name="Day N.P.J."/>
            <person name="Enright M.C."/>
            <person name="Foster T.J."/>
            <person name="Moore C.E."/>
            <person name="Hurst L."/>
            <person name="Atkin R."/>
            <person name="Barron A."/>
            <person name="Bason N."/>
            <person name="Bentley S.D."/>
            <person name="Chillingworth C."/>
            <person name="Chillingworth T."/>
            <person name="Churcher C."/>
            <person name="Clark L."/>
            <person name="Corton C."/>
            <person name="Cronin A."/>
            <person name="Doggett J."/>
            <person name="Dowd L."/>
            <person name="Feltwell T."/>
            <person name="Hance Z."/>
            <person name="Harris B."/>
            <person name="Hauser H."/>
            <person name="Holroyd S."/>
            <person name="Jagels K."/>
            <person name="James K.D."/>
            <person name="Lennard N."/>
            <person name="Line A."/>
            <person name="Mayes R."/>
            <person name="Moule S."/>
            <person name="Mungall K."/>
            <person name="Ormond D."/>
            <person name="Quail M.A."/>
            <person name="Rabbinowitsch E."/>
            <person name="Rutherford K.M."/>
            <person name="Sanders M."/>
            <person name="Sharp S."/>
            <person name="Simmonds M."/>
            <person name="Stevens K."/>
            <person name="Whitehead S."/>
            <person name="Barrell B.G."/>
            <person name="Spratt B.G."/>
            <person name="Parkhill J."/>
        </authorList>
    </citation>
    <scope>NUCLEOTIDE SEQUENCE [LARGE SCALE GENOMIC DNA]</scope>
    <source>
        <strain>MRSA252</strain>
    </source>
</reference>
<keyword id="KW-1003">Cell membrane</keyword>
<keyword id="KW-0472">Membrane</keyword>
<keyword id="KW-0653">Protein transport</keyword>
<keyword id="KW-0811">Translocation</keyword>
<keyword id="KW-0812">Transmembrane</keyword>
<keyword id="KW-1133">Transmembrane helix</keyword>
<keyword id="KW-0813">Transport</keyword>
<proteinExistence type="inferred from homology"/>
<gene>
    <name evidence="1" type="primary">secE</name>
    <name type="ordered locus">SAR0539</name>
</gene>
<organism>
    <name type="scientific">Staphylococcus aureus (strain MRSA252)</name>
    <dbReference type="NCBI Taxonomy" id="282458"/>
    <lineage>
        <taxon>Bacteria</taxon>
        <taxon>Bacillati</taxon>
        <taxon>Bacillota</taxon>
        <taxon>Bacilli</taxon>
        <taxon>Bacillales</taxon>
        <taxon>Staphylococcaceae</taxon>
        <taxon>Staphylococcus</taxon>
    </lineage>
</organism>
<protein>
    <recommendedName>
        <fullName evidence="1">Protein translocase subunit SecE</fullName>
    </recommendedName>
</protein>
<comment type="function">
    <text evidence="1">Essential subunit of the Sec protein translocation channel SecYEG. Clamps together the 2 halves of SecY. May contact the channel plug during translocation.</text>
</comment>
<comment type="subunit">
    <text evidence="1">Component of the Sec protein translocase complex. Heterotrimer consisting of SecY, SecE and SecG subunits. The heterotrimers can form oligomers, although 1 heterotrimer is thought to be able to translocate proteins. Interacts with the ribosome. Interacts with SecDF, and other proteins may be involved. Interacts with SecA.</text>
</comment>
<comment type="subcellular location">
    <subcellularLocation>
        <location evidence="1">Cell membrane</location>
        <topology evidence="1">Single-pass membrane protein</topology>
    </subcellularLocation>
</comment>
<comment type="similarity">
    <text evidence="1">Belongs to the SecE/SEC61-gamma family.</text>
</comment>
<name>SECE_STAAR</name>
<evidence type="ECO:0000255" key="1">
    <source>
        <dbReference type="HAMAP-Rule" id="MF_00422"/>
    </source>
</evidence>
<accession>Q6GJD3</accession>
<dbReference type="EMBL" id="BX571856">
    <property type="protein sequence ID" value="CAG39561.1"/>
    <property type="molecule type" value="Genomic_DNA"/>
</dbReference>
<dbReference type="RefSeq" id="WP_001074473.1">
    <property type="nucleotide sequence ID" value="NC_002952.2"/>
</dbReference>
<dbReference type="SMR" id="Q6GJD3"/>
<dbReference type="GeneID" id="98344869"/>
<dbReference type="KEGG" id="sar:SAR0539"/>
<dbReference type="HOGENOM" id="CLU_113663_8_2_9"/>
<dbReference type="Proteomes" id="UP000000596">
    <property type="component" value="Chromosome"/>
</dbReference>
<dbReference type="GO" id="GO:0005886">
    <property type="term" value="C:plasma membrane"/>
    <property type="evidence" value="ECO:0007669"/>
    <property type="project" value="UniProtKB-SubCell"/>
</dbReference>
<dbReference type="GO" id="GO:0008320">
    <property type="term" value="F:protein transmembrane transporter activity"/>
    <property type="evidence" value="ECO:0007669"/>
    <property type="project" value="UniProtKB-UniRule"/>
</dbReference>
<dbReference type="GO" id="GO:0065002">
    <property type="term" value="P:intracellular protein transmembrane transport"/>
    <property type="evidence" value="ECO:0007669"/>
    <property type="project" value="UniProtKB-UniRule"/>
</dbReference>
<dbReference type="GO" id="GO:0009306">
    <property type="term" value="P:protein secretion"/>
    <property type="evidence" value="ECO:0007669"/>
    <property type="project" value="UniProtKB-UniRule"/>
</dbReference>
<dbReference type="GO" id="GO:0006605">
    <property type="term" value="P:protein targeting"/>
    <property type="evidence" value="ECO:0007669"/>
    <property type="project" value="UniProtKB-UniRule"/>
</dbReference>
<dbReference type="GO" id="GO:0043952">
    <property type="term" value="P:protein transport by the Sec complex"/>
    <property type="evidence" value="ECO:0007669"/>
    <property type="project" value="UniProtKB-UniRule"/>
</dbReference>
<dbReference type="Gene3D" id="1.20.5.1030">
    <property type="entry name" value="Preprotein translocase secy subunit"/>
    <property type="match status" value="1"/>
</dbReference>
<dbReference type="HAMAP" id="MF_00422">
    <property type="entry name" value="SecE"/>
    <property type="match status" value="1"/>
</dbReference>
<dbReference type="InterPro" id="IPR005807">
    <property type="entry name" value="SecE_bac"/>
</dbReference>
<dbReference type="InterPro" id="IPR038379">
    <property type="entry name" value="SecE_sf"/>
</dbReference>
<dbReference type="InterPro" id="IPR001901">
    <property type="entry name" value="Translocase_SecE/Sec61-g"/>
</dbReference>
<dbReference type="NCBIfam" id="TIGR00964">
    <property type="entry name" value="secE_bact"/>
    <property type="match status" value="1"/>
</dbReference>
<dbReference type="PANTHER" id="PTHR33910">
    <property type="entry name" value="PROTEIN TRANSLOCASE SUBUNIT SECE"/>
    <property type="match status" value="1"/>
</dbReference>
<dbReference type="PANTHER" id="PTHR33910:SF1">
    <property type="entry name" value="PROTEIN TRANSLOCASE SUBUNIT SECE"/>
    <property type="match status" value="1"/>
</dbReference>
<dbReference type="Pfam" id="PF00584">
    <property type="entry name" value="SecE"/>
    <property type="match status" value="1"/>
</dbReference>
<dbReference type="PROSITE" id="PS01067">
    <property type="entry name" value="SECE_SEC61G"/>
    <property type="match status" value="1"/>
</dbReference>
<sequence length="60" mass="6932">MAKKESFFKGVKSEMEKTSWPTKEELFKYTVIVVSTVIFFLVFFYALDLGITALKNLLFG</sequence>